<protein>
    <recommendedName>
        <fullName>Putative uncharacterized protein YBR099C</fullName>
    </recommendedName>
</protein>
<proteinExistence type="uncertain"/>
<organism>
    <name type="scientific">Saccharomyces cerevisiae (strain ATCC 204508 / S288c)</name>
    <name type="common">Baker's yeast</name>
    <dbReference type="NCBI Taxonomy" id="559292"/>
    <lineage>
        <taxon>Eukaryota</taxon>
        <taxon>Fungi</taxon>
        <taxon>Dikarya</taxon>
        <taxon>Ascomycota</taxon>
        <taxon>Saccharomycotina</taxon>
        <taxon>Saccharomycetes</taxon>
        <taxon>Saccharomycetales</taxon>
        <taxon>Saccharomycetaceae</taxon>
        <taxon>Saccharomyces</taxon>
    </lineage>
</organism>
<feature type="chain" id="PRO_0000202484" description="Putative uncharacterized protein YBR099C">
    <location>
        <begin position="1"/>
        <end position="127"/>
    </location>
</feature>
<feature type="transmembrane region" description="Helical" evidence="1">
    <location>
        <begin position="84"/>
        <end position="103"/>
    </location>
</feature>
<sequence length="127" mass="14784">MRCFPINDTRFGRELINSICEFTVCILTCHSLSMKRNRCSKSNFFIPNFPTWLDFLLLGLKASSVPDNRCSTLALYFSFSNWKIALLSLFISLSIRITCFPFFEKNRIFLYNSFFCEVYCSKNSCAS</sequence>
<gene>
    <name type="ordered locus">YBR099C</name>
    <name type="ORF">YBR0828</name>
</gene>
<accession>P38258</accession>
<reference key="1">
    <citation type="journal article" date="1994" name="Yeast">
        <title>Analysis of a 70 kb region on the right arm of yeast chromosome II.</title>
        <authorList>
            <person name="Mannhaupt G."/>
            <person name="Stucka R."/>
            <person name="Ehnle S."/>
            <person name="Vetter I."/>
            <person name="Feldmann H."/>
        </authorList>
    </citation>
    <scope>NUCLEOTIDE SEQUENCE [GENOMIC DNA]</scope>
    <source>
        <strain>ATCC 204508 / S288c</strain>
    </source>
</reference>
<reference key="2">
    <citation type="journal article" date="1994" name="EMBO J.">
        <title>Complete DNA sequence of yeast chromosome II.</title>
        <authorList>
            <person name="Feldmann H."/>
            <person name="Aigle M."/>
            <person name="Aljinovic G."/>
            <person name="Andre B."/>
            <person name="Baclet M.C."/>
            <person name="Barthe C."/>
            <person name="Baur A."/>
            <person name="Becam A.-M."/>
            <person name="Biteau N."/>
            <person name="Boles E."/>
            <person name="Brandt T."/>
            <person name="Brendel M."/>
            <person name="Brueckner M."/>
            <person name="Bussereau F."/>
            <person name="Christiansen C."/>
            <person name="Contreras R."/>
            <person name="Crouzet M."/>
            <person name="Cziepluch C."/>
            <person name="Demolis N."/>
            <person name="Delaveau T."/>
            <person name="Doignon F."/>
            <person name="Domdey H."/>
            <person name="Duesterhus S."/>
            <person name="Dubois E."/>
            <person name="Dujon B."/>
            <person name="El Bakkoury M."/>
            <person name="Entian K.-D."/>
            <person name="Feuermann M."/>
            <person name="Fiers W."/>
            <person name="Fobo G.M."/>
            <person name="Fritz C."/>
            <person name="Gassenhuber J."/>
            <person name="Glansdorff N."/>
            <person name="Goffeau A."/>
            <person name="Grivell L.A."/>
            <person name="de Haan M."/>
            <person name="Hein C."/>
            <person name="Herbert C.J."/>
            <person name="Hollenberg C.P."/>
            <person name="Holmstroem K."/>
            <person name="Jacq C."/>
            <person name="Jacquet M."/>
            <person name="Jauniaux J.-C."/>
            <person name="Jonniaux J.-L."/>
            <person name="Kallesoee T."/>
            <person name="Kiesau P."/>
            <person name="Kirchrath L."/>
            <person name="Koetter P."/>
            <person name="Korol S."/>
            <person name="Liebl S."/>
            <person name="Logghe M."/>
            <person name="Lohan A.J.E."/>
            <person name="Louis E.J."/>
            <person name="Li Z.Y."/>
            <person name="Maat M.J."/>
            <person name="Mallet L."/>
            <person name="Mannhaupt G."/>
            <person name="Messenguy F."/>
            <person name="Miosga T."/>
            <person name="Molemans F."/>
            <person name="Mueller S."/>
            <person name="Nasr F."/>
            <person name="Obermaier B."/>
            <person name="Perea J."/>
            <person name="Pierard A."/>
            <person name="Piravandi E."/>
            <person name="Pohl F.M."/>
            <person name="Pohl T.M."/>
            <person name="Potier S."/>
            <person name="Proft M."/>
            <person name="Purnelle B."/>
            <person name="Ramezani Rad M."/>
            <person name="Rieger M."/>
            <person name="Rose M."/>
            <person name="Schaaff-Gerstenschlaeger I."/>
            <person name="Scherens B."/>
            <person name="Schwarzlose C."/>
            <person name="Skala J."/>
            <person name="Slonimski P.P."/>
            <person name="Smits P.H.M."/>
            <person name="Souciet J.-L."/>
            <person name="Steensma H.Y."/>
            <person name="Stucka R."/>
            <person name="Urrestarazu L.A."/>
            <person name="van der Aart Q.J.M."/>
            <person name="Van Dyck L."/>
            <person name="Vassarotti A."/>
            <person name="Vetter I."/>
            <person name="Vierendeels F."/>
            <person name="Vissers S."/>
            <person name="Wagner G."/>
            <person name="de Wergifosse P."/>
            <person name="Wolfe K.H."/>
            <person name="Zagulski M."/>
            <person name="Zimmermann F.K."/>
            <person name="Mewes H.-W."/>
            <person name="Kleine K."/>
        </authorList>
    </citation>
    <scope>NUCLEOTIDE SEQUENCE [LARGE SCALE GENOMIC DNA]</scope>
    <source>
        <strain>ATCC 204508 / S288c</strain>
    </source>
</reference>
<reference key="3">
    <citation type="journal article" date="2014" name="G3 (Bethesda)">
        <title>The reference genome sequence of Saccharomyces cerevisiae: Then and now.</title>
        <authorList>
            <person name="Engel S.R."/>
            <person name="Dietrich F.S."/>
            <person name="Fisk D.G."/>
            <person name="Binkley G."/>
            <person name="Balakrishnan R."/>
            <person name="Costanzo M.C."/>
            <person name="Dwight S.S."/>
            <person name="Hitz B.C."/>
            <person name="Karra K."/>
            <person name="Nash R.S."/>
            <person name="Weng S."/>
            <person name="Wong E.D."/>
            <person name="Lloyd P."/>
            <person name="Skrzypek M.S."/>
            <person name="Miyasato S.R."/>
            <person name="Simison M."/>
            <person name="Cherry J.M."/>
        </authorList>
    </citation>
    <scope>GENOME REANNOTATION</scope>
    <source>
        <strain>ATCC 204508 / S288c</strain>
    </source>
</reference>
<reference key="4">
    <citation type="journal article" date="2007" name="Genome Res.">
        <title>Approaching a complete repository of sequence-verified protein-encoding clones for Saccharomyces cerevisiae.</title>
        <authorList>
            <person name="Hu Y."/>
            <person name="Rolfs A."/>
            <person name="Bhullar B."/>
            <person name="Murthy T.V.S."/>
            <person name="Zhu C."/>
            <person name="Berger M.F."/>
            <person name="Camargo A.A."/>
            <person name="Kelley F."/>
            <person name="McCarron S."/>
            <person name="Jepson D."/>
            <person name="Richardson A."/>
            <person name="Raphael J."/>
            <person name="Moreira D."/>
            <person name="Taycher E."/>
            <person name="Zuo D."/>
            <person name="Mohr S."/>
            <person name="Kane M.F."/>
            <person name="Williamson J."/>
            <person name="Simpson A.J.G."/>
            <person name="Bulyk M.L."/>
            <person name="Harlow E."/>
            <person name="Marsischky G."/>
            <person name="Kolodner R.D."/>
            <person name="LaBaer J."/>
        </authorList>
    </citation>
    <scope>NUCLEOTIDE SEQUENCE [GENOMIC DNA]</scope>
    <source>
        <strain>ATCC 204508 / S288c</strain>
    </source>
</reference>
<name>YBU9_YEAST</name>
<dbReference type="EMBL" id="X78993">
    <property type="status" value="NOT_ANNOTATED_CDS"/>
    <property type="molecule type" value="Genomic_DNA"/>
</dbReference>
<dbReference type="EMBL" id="Z35968">
    <property type="protein sequence ID" value="CAA85053.1"/>
    <property type="molecule type" value="Genomic_DNA"/>
</dbReference>
<dbReference type="EMBL" id="AY558182">
    <property type="protein sequence ID" value="AAS56508.1"/>
    <property type="molecule type" value="Genomic_DNA"/>
</dbReference>
<dbReference type="PIR" id="S45967">
    <property type="entry name" value="S45967"/>
</dbReference>
<dbReference type="SMR" id="P38258"/>
<dbReference type="DIP" id="DIP-5408N"/>
<dbReference type="IntAct" id="P38258">
    <property type="interactions" value="1"/>
</dbReference>
<dbReference type="STRING" id="4932.YBR099C"/>
<dbReference type="PaxDb" id="4932-YBR099C"/>
<dbReference type="EnsemblFungi" id="YBR099C_mRNA">
    <property type="protein sequence ID" value="YBR099C"/>
    <property type="gene ID" value="YBR099C"/>
</dbReference>
<dbReference type="AGR" id="SGD:S000000303"/>
<dbReference type="SGD" id="S000000303">
    <property type="gene designation" value="YBR099C"/>
</dbReference>
<dbReference type="HOGENOM" id="CLU_1972189_0_0_1"/>
<dbReference type="GO" id="GO:0016020">
    <property type="term" value="C:membrane"/>
    <property type="evidence" value="ECO:0007669"/>
    <property type="project" value="UniProtKB-SubCell"/>
</dbReference>
<evidence type="ECO:0000255" key="1"/>
<evidence type="ECO:0000305" key="2"/>
<evidence type="ECO:0000305" key="3">
    <source>
    </source>
</evidence>
<comment type="subcellular location">
    <subcellularLocation>
        <location evidence="2">Membrane</location>
        <topology evidence="2">Single-pass membrane protein</topology>
    </subcellularLocation>
</comment>
<comment type="miscellaneous">
    <text evidence="2">Completely overlaps MMS4.</text>
</comment>
<comment type="caution">
    <text evidence="3">Product of a dubious gene prediction unlikely to encode a functional protein. Because of that it is not part of the S.cerevisiae S288c complete/reference proteome set.</text>
</comment>
<keyword id="KW-0472">Membrane</keyword>
<keyword id="KW-0812">Transmembrane</keyword>
<keyword id="KW-1133">Transmembrane helix</keyword>